<dbReference type="EC" id="1.97.1.12" evidence="1"/>
<dbReference type="EMBL" id="DQ923116">
    <property type="protein sequence ID" value="ABI49777.1"/>
    <property type="molecule type" value="Genomic_DNA"/>
</dbReference>
<dbReference type="RefSeq" id="YP_740564.1">
    <property type="nucleotide sequence ID" value="NC_008335.1"/>
</dbReference>
<dbReference type="SMR" id="Q09G47"/>
<dbReference type="GeneID" id="4271265"/>
<dbReference type="GO" id="GO:0009535">
    <property type="term" value="C:chloroplast thylakoid membrane"/>
    <property type="evidence" value="ECO:0007669"/>
    <property type="project" value="UniProtKB-SubCell"/>
</dbReference>
<dbReference type="GO" id="GO:0009522">
    <property type="term" value="C:photosystem I"/>
    <property type="evidence" value="ECO:0007669"/>
    <property type="project" value="UniProtKB-KW"/>
</dbReference>
<dbReference type="GO" id="GO:0051539">
    <property type="term" value="F:4 iron, 4 sulfur cluster binding"/>
    <property type="evidence" value="ECO:0007669"/>
    <property type="project" value="UniProtKB-KW"/>
</dbReference>
<dbReference type="GO" id="GO:0016168">
    <property type="term" value="F:chlorophyll binding"/>
    <property type="evidence" value="ECO:0007669"/>
    <property type="project" value="UniProtKB-KW"/>
</dbReference>
<dbReference type="GO" id="GO:0009055">
    <property type="term" value="F:electron transfer activity"/>
    <property type="evidence" value="ECO:0007669"/>
    <property type="project" value="UniProtKB-UniRule"/>
</dbReference>
<dbReference type="GO" id="GO:0000287">
    <property type="term" value="F:magnesium ion binding"/>
    <property type="evidence" value="ECO:0007669"/>
    <property type="project" value="UniProtKB-UniRule"/>
</dbReference>
<dbReference type="GO" id="GO:0016491">
    <property type="term" value="F:oxidoreductase activity"/>
    <property type="evidence" value="ECO:0007669"/>
    <property type="project" value="UniProtKB-KW"/>
</dbReference>
<dbReference type="GO" id="GO:0015979">
    <property type="term" value="P:photosynthesis"/>
    <property type="evidence" value="ECO:0007669"/>
    <property type="project" value="UniProtKB-UniRule"/>
</dbReference>
<dbReference type="FunFam" id="1.20.1130.10:FF:000001">
    <property type="entry name" value="Photosystem I P700 chlorophyll a apoprotein A2"/>
    <property type="match status" value="1"/>
</dbReference>
<dbReference type="Gene3D" id="1.20.1130.10">
    <property type="entry name" value="Photosystem I PsaA/PsaB"/>
    <property type="match status" value="1"/>
</dbReference>
<dbReference type="HAMAP" id="MF_00482">
    <property type="entry name" value="PSI_PsaB"/>
    <property type="match status" value="1"/>
</dbReference>
<dbReference type="InterPro" id="IPR001280">
    <property type="entry name" value="PSI_PsaA/B"/>
</dbReference>
<dbReference type="InterPro" id="IPR020586">
    <property type="entry name" value="PSI_PsaA/B_CS"/>
</dbReference>
<dbReference type="InterPro" id="IPR036408">
    <property type="entry name" value="PSI_PsaA/B_sf"/>
</dbReference>
<dbReference type="InterPro" id="IPR006244">
    <property type="entry name" value="PSI_PsaB"/>
</dbReference>
<dbReference type="NCBIfam" id="TIGR01336">
    <property type="entry name" value="psaB"/>
    <property type="match status" value="1"/>
</dbReference>
<dbReference type="PANTHER" id="PTHR30128">
    <property type="entry name" value="OUTER MEMBRANE PROTEIN, OMPA-RELATED"/>
    <property type="match status" value="1"/>
</dbReference>
<dbReference type="PANTHER" id="PTHR30128:SF19">
    <property type="entry name" value="PHOTOSYSTEM I P700 CHLOROPHYLL A APOPROTEIN A1-RELATED"/>
    <property type="match status" value="1"/>
</dbReference>
<dbReference type="Pfam" id="PF00223">
    <property type="entry name" value="PsaA_PsaB"/>
    <property type="match status" value="1"/>
</dbReference>
<dbReference type="PIRSF" id="PIRSF002905">
    <property type="entry name" value="PSI_A"/>
    <property type="match status" value="1"/>
</dbReference>
<dbReference type="PRINTS" id="PR00257">
    <property type="entry name" value="PHOTSYSPSAAB"/>
</dbReference>
<dbReference type="SUPFAM" id="SSF81558">
    <property type="entry name" value="Photosystem I subunits PsaA/PsaB"/>
    <property type="match status" value="1"/>
</dbReference>
<dbReference type="PROSITE" id="PS00419">
    <property type="entry name" value="PHOTOSYSTEM_I_PSAAB"/>
    <property type="match status" value="1"/>
</dbReference>
<gene>
    <name evidence="1" type="primary">psaB</name>
</gene>
<name>PSAB_PLAOC</name>
<sequence length="734" mass="82405">MALRFPRFSQGLAQDPTTRRIWFGIATAHDFESHDDITEERLYQNIFASHFGQLAIIFLWTSGNLFHVAWQGNFESWVRDPLHVRPIAHAIWDPHFGQPAVEAFTRGGALGPVNIAYSGVYQWWYTIGLRTNEDLYTGALFLLFLSAVSLIAGWLHLQPKWKPSVSWFKNAESRLNHHLSGLFGVSSLAWTGHLVHVAIPGSRGEYVRWNNFLDVLPHPQGLGPLFTGQWNLYAQNPDSSSHLFGTAQGAGTAILTLLGGFHPQTQSLWLTDIAHHHLAIALIFLVAGHMYRTNFGIGHSMKDLLEAHTPPGGRLGRGHKGLYDTINNSVHFQLGLALASLGVITSLVAQHMYSLPAYAFIAQDFTTQAALYTHHQYIAGFIMTGAFAHGAIFFIRDYNPEQNKDNVLARMLDHKEAIISHLSWASLFLGFHTLGLYVHNDVMLAFGTPEKQILIEPIFAQWIQSAHGKTSYGFDVLLSSTNSPAFNAGRSIWLPGWLNAVNENSNSLFLTIGPGDFLVHHAIALGLHTTTLILVKGALDARGSKLMPDKKDFGYSFPCDGPGRGGTCDISAWDAFYLAVFWMLNTIGWVTFYWHWKHITLWQGNVSQFNESSTYLMGWLRDYLWLNSSQLINGYNPFGMNSLSVWAWMFLFGHLVWATGFMFLISWRGYWQELIETLAWAHERTPLANLIRWRDKPVALSIVQARLVGLAHFSVGYIFTYAAFLIASTSGKFG</sequence>
<feature type="chain" id="PRO_0000300054" description="Photosystem I P700 chlorophyll a apoprotein A2">
    <location>
        <begin position="1"/>
        <end position="734"/>
    </location>
</feature>
<feature type="transmembrane region" description="Helical; Name=I" evidence="1">
    <location>
        <begin position="46"/>
        <end position="69"/>
    </location>
</feature>
<feature type="transmembrane region" description="Helical; Name=II" evidence="1">
    <location>
        <begin position="135"/>
        <end position="158"/>
    </location>
</feature>
<feature type="transmembrane region" description="Helical; Name=III" evidence="1">
    <location>
        <begin position="175"/>
        <end position="199"/>
    </location>
</feature>
<feature type="transmembrane region" description="Helical; Name=IV" evidence="1">
    <location>
        <begin position="273"/>
        <end position="291"/>
    </location>
</feature>
<feature type="transmembrane region" description="Helical; Name=V" evidence="1">
    <location>
        <begin position="330"/>
        <end position="353"/>
    </location>
</feature>
<feature type="transmembrane region" description="Helical; Name=VI" evidence="1">
    <location>
        <begin position="369"/>
        <end position="395"/>
    </location>
</feature>
<feature type="transmembrane region" description="Helical; Name=VII" evidence="1">
    <location>
        <begin position="417"/>
        <end position="439"/>
    </location>
</feature>
<feature type="transmembrane region" description="Helical; Name=VIII" evidence="1">
    <location>
        <begin position="517"/>
        <end position="535"/>
    </location>
</feature>
<feature type="transmembrane region" description="Helical; Name=IX" evidence="1">
    <location>
        <begin position="575"/>
        <end position="596"/>
    </location>
</feature>
<feature type="transmembrane region" description="Helical; Name=X" evidence="1">
    <location>
        <begin position="643"/>
        <end position="665"/>
    </location>
</feature>
<feature type="transmembrane region" description="Helical; Name=XI" evidence="1">
    <location>
        <begin position="707"/>
        <end position="727"/>
    </location>
</feature>
<feature type="binding site" evidence="1">
    <location>
        <position position="559"/>
    </location>
    <ligand>
        <name>[4Fe-4S] cluster</name>
        <dbReference type="ChEBI" id="CHEBI:49883"/>
        <note>ligand shared between dimeric partners</note>
    </ligand>
</feature>
<feature type="binding site" evidence="1">
    <location>
        <position position="568"/>
    </location>
    <ligand>
        <name>[4Fe-4S] cluster</name>
        <dbReference type="ChEBI" id="CHEBI:49883"/>
        <note>ligand shared between dimeric partners</note>
    </ligand>
</feature>
<feature type="binding site" description="axial binding residue" evidence="1">
    <location>
        <position position="654"/>
    </location>
    <ligand>
        <name>chlorophyll a</name>
        <dbReference type="ChEBI" id="CHEBI:58416"/>
        <label>B1</label>
    </ligand>
    <ligandPart>
        <name>Mg</name>
        <dbReference type="ChEBI" id="CHEBI:25107"/>
    </ligandPart>
</feature>
<feature type="binding site" description="axial binding residue" evidence="1">
    <location>
        <position position="662"/>
    </location>
    <ligand>
        <name>chlorophyll a</name>
        <dbReference type="ChEBI" id="CHEBI:58416"/>
        <label>B3</label>
    </ligand>
    <ligandPart>
        <name>Mg</name>
        <dbReference type="ChEBI" id="CHEBI:25107"/>
    </ligandPart>
</feature>
<feature type="binding site" evidence="1">
    <location>
        <position position="670"/>
    </location>
    <ligand>
        <name>chlorophyll a</name>
        <dbReference type="ChEBI" id="CHEBI:58416"/>
        <label>B3</label>
    </ligand>
</feature>
<feature type="binding site" evidence="1">
    <location>
        <position position="671"/>
    </location>
    <ligand>
        <name>phylloquinone</name>
        <dbReference type="ChEBI" id="CHEBI:18067"/>
        <label>B</label>
    </ligand>
</feature>
<organism>
    <name type="scientific">Platanus occidentalis</name>
    <name type="common">Sycamore</name>
    <name type="synonym">American plane tree</name>
    <dbReference type="NCBI Taxonomy" id="4403"/>
    <lineage>
        <taxon>Eukaryota</taxon>
        <taxon>Viridiplantae</taxon>
        <taxon>Streptophyta</taxon>
        <taxon>Embryophyta</taxon>
        <taxon>Tracheophyta</taxon>
        <taxon>Spermatophyta</taxon>
        <taxon>Magnoliopsida</taxon>
        <taxon>Proteales</taxon>
        <taxon>Platanaceae</taxon>
        <taxon>Platanus</taxon>
    </lineage>
</organism>
<proteinExistence type="inferred from homology"/>
<protein>
    <recommendedName>
        <fullName evidence="1">Photosystem I P700 chlorophyll a apoprotein A2</fullName>
        <ecNumber evidence="1">1.97.1.12</ecNumber>
    </recommendedName>
    <alternativeName>
        <fullName evidence="1">PSI-B</fullName>
    </alternativeName>
    <alternativeName>
        <fullName evidence="1">PsaB</fullName>
    </alternativeName>
</protein>
<geneLocation type="chloroplast"/>
<evidence type="ECO:0000255" key="1">
    <source>
        <dbReference type="HAMAP-Rule" id="MF_00482"/>
    </source>
</evidence>
<accession>Q09G47</accession>
<keyword id="KW-0004">4Fe-4S</keyword>
<keyword id="KW-0148">Chlorophyll</keyword>
<keyword id="KW-0150">Chloroplast</keyword>
<keyword id="KW-0157">Chromophore</keyword>
<keyword id="KW-0249">Electron transport</keyword>
<keyword id="KW-0408">Iron</keyword>
<keyword id="KW-0411">Iron-sulfur</keyword>
<keyword id="KW-0460">Magnesium</keyword>
<keyword id="KW-0472">Membrane</keyword>
<keyword id="KW-0479">Metal-binding</keyword>
<keyword id="KW-0560">Oxidoreductase</keyword>
<keyword id="KW-0602">Photosynthesis</keyword>
<keyword id="KW-0603">Photosystem I</keyword>
<keyword id="KW-0934">Plastid</keyword>
<keyword id="KW-0793">Thylakoid</keyword>
<keyword id="KW-0812">Transmembrane</keyword>
<keyword id="KW-1133">Transmembrane helix</keyword>
<keyword id="KW-0813">Transport</keyword>
<reference key="1">
    <citation type="journal article" date="2006" name="BMC Plant Biol.">
        <title>Rapid and accurate pyrosequencing of angiosperm plastid genomes.</title>
        <authorList>
            <person name="Moore M.J."/>
            <person name="Dhingra A."/>
            <person name="Soltis P.S."/>
            <person name="Shaw R."/>
            <person name="Farmerie W.G."/>
            <person name="Folta K.M."/>
            <person name="Soltis D.E."/>
        </authorList>
    </citation>
    <scope>NUCLEOTIDE SEQUENCE [LARGE SCALE GENOMIC DNA]</scope>
</reference>
<comment type="function">
    <text evidence="1">PsaA and PsaB bind P700, the primary electron donor of photosystem I (PSI), as well as the electron acceptors A0, A1 and FX. PSI is a plastocyanin-ferredoxin oxidoreductase, converting photonic excitation into a charge separation, which transfers an electron from the donor P700 chlorophyll pair to the spectroscopically characterized acceptors A0, A1, FX, FA and FB in turn. Oxidized P700 is reduced on the lumenal side of the thylakoid membrane by plastocyanin.</text>
</comment>
<comment type="catalytic activity">
    <reaction evidence="1">
        <text>reduced [plastocyanin] + hnu + oxidized [2Fe-2S]-[ferredoxin] = oxidized [plastocyanin] + reduced [2Fe-2S]-[ferredoxin]</text>
        <dbReference type="Rhea" id="RHEA:30407"/>
        <dbReference type="Rhea" id="RHEA-COMP:10000"/>
        <dbReference type="Rhea" id="RHEA-COMP:10001"/>
        <dbReference type="Rhea" id="RHEA-COMP:10039"/>
        <dbReference type="Rhea" id="RHEA-COMP:10040"/>
        <dbReference type="ChEBI" id="CHEBI:29036"/>
        <dbReference type="ChEBI" id="CHEBI:30212"/>
        <dbReference type="ChEBI" id="CHEBI:33737"/>
        <dbReference type="ChEBI" id="CHEBI:33738"/>
        <dbReference type="ChEBI" id="CHEBI:49552"/>
        <dbReference type="EC" id="1.97.1.12"/>
    </reaction>
</comment>
<comment type="cofactor">
    <text evidence="1">P700 is a chlorophyll a/chlorophyll a' dimer, A0 is one or more chlorophyll a, A1 is one or both phylloquinones and FX is a shared 4Fe-4S iron-sulfur center.</text>
</comment>
<comment type="subunit">
    <text evidence="1">The PsaA/B heterodimer binds the P700 chlorophyll special pair and subsequent electron acceptors. PSI consists of a core antenna complex that captures photons, and an electron transfer chain that converts photonic excitation into a charge separation. The eukaryotic PSI reaction center is composed of at least 11 subunits.</text>
</comment>
<comment type="subcellular location">
    <subcellularLocation>
        <location evidence="1">Plastid</location>
        <location evidence="1">Chloroplast thylakoid membrane</location>
        <topology evidence="1">Multi-pass membrane protein</topology>
    </subcellularLocation>
</comment>
<comment type="similarity">
    <text evidence="1">Belongs to the PsaA/PsaB family.</text>
</comment>